<comment type="catalytic activity">
    <reaction evidence="1">
        <text>adenine + H2O + H(+) = hypoxanthine + NH4(+)</text>
        <dbReference type="Rhea" id="RHEA:23688"/>
        <dbReference type="ChEBI" id="CHEBI:15377"/>
        <dbReference type="ChEBI" id="CHEBI:15378"/>
        <dbReference type="ChEBI" id="CHEBI:16708"/>
        <dbReference type="ChEBI" id="CHEBI:17368"/>
        <dbReference type="ChEBI" id="CHEBI:28938"/>
        <dbReference type="EC" id="3.5.4.2"/>
    </reaction>
</comment>
<comment type="cofactor">
    <cofactor evidence="1">
        <name>Mn(2+)</name>
        <dbReference type="ChEBI" id="CHEBI:29035"/>
    </cofactor>
</comment>
<comment type="subunit">
    <text evidence="1">Homodimer.</text>
</comment>
<comment type="similarity">
    <text evidence="1">Belongs to the metallo-dependent hydrolases superfamily. Adenine deaminase family.</text>
</comment>
<proteinExistence type="inferred from homology"/>
<name>ADEC_ECOSM</name>
<gene>
    <name evidence="1" type="primary">ade</name>
    <name type="ordered locus">EcSMS35_4030</name>
</gene>
<sequence length="588" mass="63778">MNNSINHKFHHISRAEYQELLAVSRGDAVADYIIDNVSILDLINGGEISGPIVIKGRYIAGVGAEYTDAPALQRIDARGATAVPGFIDAHLHIESSMMTPVTFETATLPRGLTTVICDPHEIVNVMGEAGFAWFARCAEQARQNQYLQVSSCVPALEGCDVNGASFTLEQMLAWRDHPQVTGLAEMMDYPGVISGQNALLDKLDAFRHLTLDGHCPGLGGKELNAYIAAGIENCHESYQLEEGRRKLQLGMSLMIREGSAARNLNALATLINEFNSPQCMLCTDDRNPWEIAHEGHIDALIRRLIEQHNVPLHVAYRVASWSTARHFGLNHLGLLAPGKQADIVLLSDARKVTVQQVLVKGEPIDAQTLQAEESARLAQSAPPYGNTIDRQPVSASDFALQFTPGKRYRVIEAIHNELITHSRSSVYSENGFDRDDVCFIAVLERYGQRLAPACGLLGGFGLNEGALAATVSHDSHNIVVIGRSAEEMALAVNQVIQDGGGLCVVRNGQVQSHLPLPIAGLMSTDTAQSLAEQIDALKAAARECGPLPDEPFIQMAFLSLPVIPALKLTSQGLFDGEKFAFTTLEVTE</sequence>
<protein>
    <recommendedName>
        <fullName evidence="1">Adenine deaminase</fullName>
        <shortName evidence="1">Adenase</shortName>
        <shortName evidence="1">Adenine aminase</shortName>
        <ecNumber evidence="1">3.5.4.2</ecNumber>
    </recommendedName>
</protein>
<organism>
    <name type="scientific">Escherichia coli (strain SMS-3-5 / SECEC)</name>
    <dbReference type="NCBI Taxonomy" id="439855"/>
    <lineage>
        <taxon>Bacteria</taxon>
        <taxon>Pseudomonadati</taxon>
        <taxon>Pseudomonadota</taxon>
        <taxon>Gammaproteobacteria</taxon>
        <taxon>Enterobacterales</taxon>
        <taxon>Enterobacteriaceae</taxon>
        <taxon>Escherichia</taxon>
    </lineage>
</organism>
<evidence type="ECO:0000255" key="1">
    <source>
        <dbReference type="HAMAP-Rule" id="MF_01518"/>
    </source>
</evidence>
<feature type="chain" id="PRO_1000146239" description="Adenine deaminase">
    <location>
        <begin position="1"/>
        <end position="588"/>
    </location>
</feature>
<keyword id="KW-0378">Hydrolase</keyword>
<keyword id="KW-0464">Manganese</keyword>
<reference key="1">
    <citation type="journal article" date="2008" name="J. Bacteriol.">
        <title>Insights into the environmental resistance gene pool from the genome sequence of the multidrug-resistant environmental isolate Escherichia coli SMS-3-5.</title>
        <authorList>
            <person name="Fricke W.F."/>
            <person name="Wright M.S."/>
            <person name="Lindell A.H."/>
            <person name="Harkins D.M."/>
            <person name="Baker-Austin C."/>
            <person name="Ravel J."/>
            <person name="Stepanauskas R."/>
        </authorList>
    </citation>
    <scope>NUCLEOTIDE SEQUENCE [LARGE SCALE GENOMIC DNA]</scope>
    <source>
        <strain>SMS-3-5 / SECEC</strain>
    </source>
</reference>
<dbReference type="EC" id="3.5.4.2" evidence="1"/>
<dbReference type="EMBL" id="CP000970">
    <property type="protein sequence ID" value="ACB15983.1"/>
    <property type="molecule type" value="Genomic_DNA"/>
</dbReference>
<dbReference type="SMR" id="B1LKZ0"/>
<dbReference type="KEGG" id="ecm:EcSMS35_4030"/>
<dbReference type="HOGENOM" id="CLU_027935_0_0_6"/>
<dbReference type="Proteomes" id="UP000007011">
    <property type="component" value="Chromosome"/>
</dbReference>
<dbReference type="GO" id="GO:0000034">
    <property type="term" value="F:adenine deaminase activity"/>
    <property type="evidence" value="ECO:0007669"/>
    <property type="project" value="UniProtKB-UniRule"/>
</dbReference>
<dbReference type="GO" id="GO:0006146">
    <property type="term" value="P:adenine catabolic process"/>
    <property type="evidence" value="ECO:0007669"/>
    <property type="project" value="InterPro"/>
</dbReference>
<dbReference type="CDD" id="cd01295">
    <property type="entry name" value="AdeC"/>
    <property type="match status" value="1"/>
</dbReference>
<dbReference type="FunFam" id="3.20.20.140:FF:000016">
    <property type="entry name" value="Adenine deaminase"/>
    <property type="match status" value="1"/>
</dbReference>
<dbReference type="Gene3D" id="3.20.20.140">
    <property type="entry name" value="Metal-dependent hydrolases"/>
    <property type="match status" value="1"/>
</dbReference>
<dbReference type="Gene3D" id="2.30.40.10">
    <property type="entry name" value="Urease, subunit C, domain 1"/>
    <property type="match status" value="1"/>
</dbReference>
<dbReference type="HAMAP" id="MF_01518">
    <property type="entry name" value="Adenine_deamin"/>
    <property type="match status" value="1"/>
</dbReference>
<dbReference type="InterPro" id="IPR006679">
    <property type="entry name" value="Adenine_deam"/>
</dbReference>
<dbReference type="InterPro" id="IPR026912">
    <property type="entry name" value="Adenine_deam_C"/>
</dbReference>
<dbReference type="InterPro" id="IPR006680">
    <property type="entry name" value="Amidohydro-rel"/>
</dbReference>
<dbReference type="InterPro" id="IPR011059">
    <property type="entry name" value="Metal-dep_hydrolase_composite"/>
</dbReference>
<dbReference type="InterPro" id="IPR032466">
    <property type="entry name" value="Metal_Hydrolase"/>
</dbReference>
<dbReference type="NCBIfam" id="TIGR01178">
    <property type="entry name" value="ade"/>
    <property type="match status" value="1"/>
</dbReference>
<dbReference type="NCBIfam" id="NF007457">
    <property type="entry name" value="PRK10027.1"/>
    <property type="match status" value="1"/>
</dbReference>
<dbReference type="PANTHER" id="PTHR11113:SF2">
    <property type="entry name" value="ADENINE DEAMINASE"/>
    <property type="match status" value="1"/>
</dbReference>
<dbReference type="PANTHER" id="PTHR11113">
    <property type="entry name" value="N-ACETYLGLUCOSAMINE-6-PHOSPHATE DEACETYLASE"/>
    <property type="match status" value="1"/>
</dbReference>
<dbReference type="Pfam" id="PF13382">
    <property type="entry name" value="Adenine_deam_C"/>
    <property type="match status" value="1"/>
</dbReference>
<dbReference type="Pfam" id="PF01979">
    <property type="entry name" value="Amidohydro_1"/>
    <property type="match status" value="1"/>
</dbReference>
<dbReference type="SUPFAM" id="SSF51338">
    <property type="entry name" value="Composite domain of metallo-dependent hydrolases"/>
    <property type="match status" value="1"/>
</dbReference>
<dbReference type="SUPFAM" id="SSF51556">
    <property type="entry name" value="Metallo-dependent hydrolases"/>
    <property type="match status" value="1"/>
</dbReference>
<accession>B1LKZ0</accession>